<sequence length="120" mass="13862">MLIGILSKKYVKEILELLNEKGELHFSQIHKEIPTHMSSLNRTLNELVKLGLISKRKEDNKQALPKTYYKLTPLGKKALLLYEVEKIIENSKNNQNIIIQIINGKNHNIINAKIVNIHNK</sequence>
<organism>
    <name type="scientific">Methanocaldococcus jannaschii (strain ATCC 43067 / DSM 2661 / JAL-1 / JCM 10045 / NBRC 100440)</name>
    <name type="common">Methanococcus jannaschii</name>
    <dbReference type="NCBI Taxonomy" id="243232"/>
    <lineage>
        <taxon>Archaea</taxon>
        <taxon>Methanobacteriati</taxon>
        <taxon>Methanobacteriota</taxon>
        <taxon>Methanomada group</taxon>
        <taxon>Methanococci</taxon>
        <taxon>Methanococcales</taxon>
        <taxon>Methanocaldococcaceae</taxon>
        <taxon>Methanocaldococcus</taxon>
    </lineage>
</organism>
<keyword id="KW-1185">Reference proteome</keyword>
<protein>
    <recommendedName>
        <fullName>Uncharacterized protein MJ0944</fullName>
    </recommendedName>
</protein>
<proteinExistence type="predicted"/>
<dbReference type="EMBL" id="L77117">
    <property type="protein sequence ID" value="AAB98954.1"/>
    <property type="molecule type" value="Genomic_DNA"/>
</dbReference>
<dbReference type="PIR" id="H64417">
    <property type="entry name" value="H64417"/>
</dbReference>
<dbReference type="RefSeq" id="WP_010870458.1">
    <property type="nucleotide sequence ID" value="NC_000909.1"/>
</dbReference>
<dbReference type="SMR" id="Q58354"/>
<dbReference type="PaxDb" id="243232-MJ_0944"/>
<dbReference type="EnsemblBacteria" id="AAB98954">
    <property type="protein sequence ID" value="AAB98954"/>
    <property type="gene ID" value="MJ_0944"/>
</dbReference>
<dbReference type="GeneID" id="1451841"/>
<dbReference type="KEGG" id="mja:MJ_0944"/>
<dbReference type="eggNOG" id="arCOG01057">
    <property type="taxonomic scope" value="Archaea"/>
</dbReference>
<dbReference type="HOGENOM" id="CLU_153628_2_0_2"/>
<dbReference type="InParanoid" id="Q58354"/>
<dbReference type="OrthoDB" id="66130at2157"/>
<dbReference type="PhylomeDB" id="Q58354"/>
<dbReference type="Proteomes" id="UP000000805">
    <property type="component" value="Chromosome"/>
</dbReference>
<dbReference type="Gene3D" id="1.10.10.10">
    <property type="entry name" value="Winged helix-like DNA-binding domain superfamily/Winged helix DNA-binding domain"/>
    <property type="match status" value="1"/>
</dbReference>
<dbReference type="InterPro" id="IPR005149">
    <property type="entry name" value="Tscrpt_reg_PadR_N"/>
</dbReference>
<dbReference type="InterPro" id="IPR036388">
    <property type="entry name" value="WH-like_DNA-bd_sf"/>
</dbReference>
<dbReference type="InterPro" id="IPR036390">
    <property type="entry name" value="WH_DNA-bd_sf"/>
</dbReference>
<dbReference type="Pfam" id="PF03551">
    <property type="entry name" value="PadR"/>
    <property type="match status" value="1"/>
</dbReference>
<dbReference type="SUPFAM" id="SSF46785">
    <property type="entry name" value="Winged helix' DNA-binding domain"/>
    <property type="match status" value="1"/>
</dbReference>
<name>Y944_METJA</name>
<gene>
    <name type="ordered locus">MJ0944</name>
</gene>
<evidence type="ECO:0000305" key="1"/>
<feature type="chain" id="PRO_0000107115" description="Uncharacterized protein MJ0944">
    <location>
        <begin position="1"/>
        <end position="120"/>
    </location>
</feature>
<reference key="1">
    <citation type="journal article" date="1996" name="Science">
        <title>Complete genome sequence of the methanogenic archaeon, Methanococcus jannaschii.</title>
        <authorList>
            <person name="Bult C.J."/>
            <person name="White O."/>
            <person name="Olsen G.J."/>
            <person name="Zhou L."/>
            <person name="Fleischmann R.D."/>
            <person name="Sutton G.G."/>
            <person name="Blake J.A."/>
            <person name="FitzGerald L.M."/>
            <person name="Clayton R.A."/>
            <person name="Gocayne J.D."/>
            <person name="Kerlavage A.R."/>
            <person name="Dougherty B.A."/>
            <person name="Tomb J.-F."/>
            <person name="Adams M.D."/>
            <person name="Reich C.I."/>
            <person name="Overbeek R."/>
            <person name="Kirkness E.F."/>
            <person name="Weinstock K.G."/>
            <person name="Merrick J.M."/>
            <person name="Glodek A."/>
            <person name="Scott J.L."/>
            <person name="Geoghagen N.S.M."/>
            <person name="Weidman J.F."/>
            <person name="Fuhrmann J.L."/>
            <person name="Nguyen D."/>
            <person name="Utterback T.R."/>
            <person name="Kelley J.M."/>
            <person name="Peterson J.D."/>
            <person name="Sadow P.W."/>
            <person name="Hanna M.C."/>
            <person name="Cotton M.D."/>
            <person name="Roberts K.M."/>
            <person name="Hurst M.A."/>
            <person name="Kaine B.P."/>
            <person name="Borodovsky M."/>
            <person name="Klenk H.-P."/>
            <person name="Fraser C.M."/>
            <person name="Smith H.O."/>
            <person name="Woese C.R."/>
            <person name="Venter J.C."/>
        </authorList>
    </citation>
    <scope>NUCLEOTIDE SEQUENCE [LARGE SCALE GENOMIC DNA]</scope>
    <source>
        <strain>ATCC 43067 / DSM 2661 / JAL-1 / JCM 10045 / NBRC 100440</strain>
    </source>
</reference>
<accession>Q58354</accession>
<comment type="similarity">
    <text evidence="1">To M.jannaschii MJ0361.</text>
</comment>